<name>SYS_PSECP</name>
<gene>
    <name evidence="1" type="primary">serS</name>
    <name type="ordered locus">Achl_0285</name>
</gene>
<dbReference type="EC" id="6.1.1.11" evidence="1"/>
<dbReference type="EMBL" id="CP001341">
    <property type="protein sequence ID" value="ACL38285.1"/>
    <property type="molecule type" value="Genomic_DNA"/>
</dbReference>
<dbReference type="RefSeq" id="WP_015935512.1">
    <property type="nucleotide sequence ID" value="NC_011886.1"/>
</dbReference>
<dbReference type="SMR" id="B8H9Q1"/>
<dbReference type="STRING" id="452863.Achl_0285"/>
<dbReference type="KEGG" id="ach:Achl_0285"/>
<dbReference type="eggNOG" id="COG0172">
    <property type="taxonomic scope" value="Bacteria"/>
</dbReference>
<dbReference type="HOGENOM" id="CLU_023797_0_1_11"/>
<dbReference type="OrthoDB" id="9804647at2"/>
<dbReference type="UniPathway" id="UPA00906">
    <property type="reaction ID" value="UER00895"/>
</dbReference>
<dbReference type="Proteomes" id="UP000002505">
    <property type="component" value="Chromosome"/>
</dbReference>
<dbReference type="GO" id="GO:0005737">
    <property type="term" value="C:cytoplasm"/>
    <property type="evidence" value="ECO:0007669"/>
    <property type="project" value="UniProtKB-SubCell"/>
</dbReference>
<dbReference type="GO" id="GO:0005524">
    <property type="term" value="F:ATP binding"/>
    <property type="evidence" value="ECO:0007669"/>
    <property type="project" value="UniProtKB-UniRule"/>
</dbReference>
<dbReference type="GO" id="GO:0004828">
    <property type="term" value="F:serine-tRNA ligase activity"/>
    <property type="evidence" value="ECO:0007669"/>
    <property type="project" value="UniProtKB-UniRule"/>
</dbReference>
<dbReference type="GO" id="GO:0016260">
    <property type="term" value="P:selenocysteine biosynthetic process"/>
    <property type="evidence" value="ECO:0007669"/>
    <property type="project" value="UniProtKB-UniRule"/>
</dbReference>
<dbReference type="GO" id="GO:0006434">
    <property type="term" value="P:seryl-tRNA aminoacylation"/>
    <property type="evidence" value="ECO:0007669"/>
    <property type="project" value="UniProtKB-UniRule"/>
</dbReference>
<dbReference type="CDD" id="cd00770">
    <property type="entry name" value="SerRS_core"/>
    <property type="match status" value="1"/>
</dbReference>
<dbReference type="Gene3D" id="3.30.930.10">
    <property type="entry name" value="Bira Bifunctional Protein, Domain 2"/>
    <property type="match status" value="1"/>
</dbReference>
<dbReference type="Gene3D" id="1.10.287.40">
    <property type="entry name" value="Serine-tRNA synthetase, tRNA binding domain"/>
    <property type="match status" value="1"/>
</dbReference>
<dbReference type="HAMAP" id="MF_00176">
    <property type="entry name" value="Ser_tRNA_synth_type1"/>
    <property type="match status" value="1"/>
</dbReference>
<dbReference type="InterPro" id="IPR002314">
    <property type="entry name" value="aa-tRNA-synt_IIb"/>
</dbReference>
<dbReference type="InterPro" id="IPR006195">
    <property type="entry name" value="aa-tRNA-synth_II"/>
</dbReference>
<dbReference type="InterPro" id="IPR045864">
    <property type="entry name" value="aa-tRNA-synth_II/BPL/LPL"/>
</dbReference>
<dbReference type="InterPro" id="IPR002317">
    <property type="entry name" value="Ser-tRNA-ligase_type_1"/>
</dbReference>
<dbReference type="InterPro" id="IPR015866">
    <property type="entry name" value="Ser-tRNA-synth_1_N"/>
</dbReference>
<dbReference type="InterPro" id="IPR042103">
    <property type="entry name" value="SerRS_1_N_sf"/>
</dbReference>
<dbReference type="InterPro" id="IPR033729">
    <property type="entry name" value="SerRS_core"/>
</dbReference>
<dbReference type="InterPro" id="IPR010978">
    <property type="entry name" value="tRNA-bd_arm"/>
</dbReference>
<dbReference type="NCBIfam" id="TIGR00414">
    <property type="entry name" value="serS"/>
    <property type="match status" value="1"/>
</dbReference>
<dbReference type="PANTHER" id="PTHR11778">
    <property type="entry name" value="SERYL-TRNA SYNTHETASE"/>
    <property type="match status" value="1"/>
</dbReference>
<dbReference type="Pfam" id="PF02403">
    <property type="entry name" value="Seryl_tRNA_N"/>
    <property type="match status" value="1"/>
</dbReference>
<dbReference type="Pfam" id="PF00587">
    <property type="entry name" value="tRNA-synt_2b"/>
    <property type="match status" value="1"/>
</dbReference>
<dbReference type="PIRSF" id="PIRSF001529">
    <property type="entry name" value="Ser-tRNA-synth_IIa"/>
    <property type="match status" value="1"/>
</dbReference>
<dbReference type="PRINTS" id="PR00981">
    <property type="entry name" value="TRNASYNTHSER"/>
</dbReference>
<dbReference type="SUPFAM" id="SSF55681">
    <property type="entry name" value="Class II aaRS and biotin synthetases"/>
    <property type="match status" value="1"/>
</dbReference>
<dbReference type="SUPFAM" id="SSF46589">
    <property type="entry name" value="tRNA-binding arm"/>
    <property type="match status" value="1"/>
</dbReference>
<dbReference type="PROSITE" id="PS50862">
    <property type="entry name" value="AA_TRNA_LIGASE_II"/>
    <property type="match status" value="1"/>
</dbReference>
<comment type="function">
    <text evidence="1">Catalyzes the attachment of serine to tRNA(Ser). Is also able to aminoacylate tRNA(Sec) with serine, to form the misacylated tRNA L-seryl-tRNA(Sec), which will be further converted into selenocysteinyl-tRNA(Sec).</text>
</comment>
<comment type="catalytic activity">
    <reaction evidence="1">
        <text>tRNA(Ser) + L-serine + ATP = L-seryl-tRNA(Ser) + AMP + diphosphate + H(+)</text>
        <dbReference type="Rhea" id="RHEA:12292"/>
        <dbReference type="Rhea" id="RHEA-COMP:9669"/>
        <dbReference type="Rhea" id="RHEA-COMP:9703"/>
        <dbReference type="ChEBI" id="CHEBI:15378"/>
        <dbReference type="ChEBI" id="CHEBI:30616"/>
        <dbReference type="ChEBI" id="CHEBI:33019"/>
        <dbReference type="ChEBI" id="CHEBI:33384"/>
        <dbReference type="ChEBI" id="CHEBI:78442"/>
        <dbReference type="ChEBI" id="CHEBI:78533"/>
        <dbReference type="ChEBI" id="CHEBI:456215"/>
        <dbReference type="EC" id="6.1.1.11"/>
    </reaction>
</comment>
<comment type="catalytic activity">
    <reaction evidence="1">
        <text>tRNA(Sec) + L-serine + ATP = L-seryl-tRNA(Sec) + AMP + diphosphate + H(+)</text>
        <dbReference type="Rhea" id="RHEA:42580"/>
        <dbReference type="Rhea" id="RHEA-COMP:9742"/>
        <dbReference type="Rhea" id="RHEA-COMP:10128"/>
        <dbReference type="ChEBI" id="CHEBI:15378"/>
        <dbReference type="ChEBI" id="CHEBI:30616"/>
        <dbReference type="ChEBI" id="CHEBI:33019"/>
        <dbReference type="ChEBI" id="CHEBI:33384"/>
        <dbReference type="ChEBI" id="CHEBI:78442"/>
        <dbReference type="ChEBI" id="CHEBI:78533"/>
        <dbReference type="ChEBI" id="CHEBI:456215"/>
        <dbReference type="EC" id="6.1.1.11"/>
    </reaction>
</comment>
<comment type="pathway">
    <text evidence="1">Aminoacyl-tRNA biosynthesis; selenocysteinyl-tRNA(Sec) biosynthesis; L-seryl-tRNA(Sec) from L-serine and tRNA(Sec): step 1/1.</text>
</comment>
<comment type="subunit">
    <text evidence="1">Homodimer. The tRNA molecule binds across the dimer.</text>
</comment>
<comment type="subcellular location">
    <subcellularLocation>
        <location evidence="1">Cytoplasm</location>
    </subcellularLocation>
</comment>
<comment type="domain">
    <text evidence="1">Consists of two distinct domains, a catalytic core and a N-terminal extension that is involved in tRNA binding.</text>
</comment>
<comment type="similarity">
    <text evidence="1">Belongs to the class-II aminoacyl-tRNA synthetase family. Type-1 seryl-tRNA synthetase subfamily.</text>
</comment>
<accession>B8H9Q1</accession>
<feature type="chain" id="PRO_1000123866" description="Serine--tRNA ligase">
    <location>
        <begin position="1"/>
        <end position="426"/>
    </location>
</feature>
<feature type="region of interest" description="Disordered" evidence="2">
    <location>
        <begin position="1"/>
        <end position="22"/>
    </location>
</feature>
<feature type="compositionally biased region" description="Basic and acidic residues" evidence="2">
    <location>
        <begin position="1"/>
        <end position="15"/>
    </location>
</feature>
<feature type="binding site" evidence="1">
    <location>
        <begin position="228"/>
        <end position="230"/>
    </location>
    <ligand>
        <name>L-serine</name>
        <dbReference type="ChEBI" id="CHEBI:33384"/>
    </ligand>
</feature>
<feature type="binding site" evidence="1">
    <location>
        <begin position="259"/>
        <end position="261"/>
    </location>
    <ligand>
        <name>ATP</name>
        <dbReference type="ChEBI" id="CHEBI:30616"/>
    </ligand>
</feature>
<feature type="binding site" evidence="1">
    <location>
        <position position="275"/>
    </location>
    <ligand>
        <name>ATP</name>
        <dbReference type="ChEBI" id="CHEBI:30616"/>
    </ligand>
</feature>
<feature type="binding site" evidence="1">
    <location>
        <position position="282"/>
    </location>
    <ligand>
        <name>L-serine</name>
        <dbReference type="ChEBI" id="CHEBI:33384"/>
    </ligand>
</feature>
<feature type="binding site" evidence="1">
    <location>
        <begin position="346"/>
        <end position="349"/>
    </location>
    <ligand>
        <name>ATP</name>
        <dbReference type="ChEBI" id="CHEBI:30616"/>
    </ligand>
</feature>
<feature type="binding site" evidence="1">
    <location>
        <position position="386"/>
    </location>
    <ligand>
        <name>L-serine</name>
        <dbReference type="ChEBI" id="CHEBI:33384"/>
    </ligand>
</feature>
<proteinExistence type="inferred from homology"/>
<protein>
    <recommendedName>
        <fullName evidence="1">Serine--tRNA ligase</fullName>
        <ecNumber evidence="1">6.1.1.11</ecNumber>
    </recommendedName>
    <alternativeName>
        <fullName evidence="1">Seryl-tRNA synthetase</fullName>
        <shortName evidence="1">SerRS</shortName>
    </alternativeName>
    <alternativeName>
        <fullName evidence="1">Seryl-tRNA(Ser/Sec) synthetase</fullName>
    </alternativeName>
</protein>
<organism>
    <name type="scientific">Pseudarthrobacter chlorophenolicus (strain ATCC 700700 / DSM 12829 / CIP 107037 / JCM 12360 / KCTC 9906 / NCIMB 13794 / A6)</name>
    <name type="common">Arthrobacter chlorophenolicus</name>
    <dbReference type="NCBI Taxonomy" id="452863"/>
    <lineage>
        <taxon>Bacteria</taxon>
        <taxon>Bacillati</taxon>
        <taxon>Actinomycetota</taxon>
        <taxon>Actinomycetes</taxon>
        <taxon>Micrococcales</taxon>
        <taxon>Micrococcaceae</taxon>
        <taxon>Pseudarthrobacter</taxon>
    </lineage>
</organism>
<reference key="1">
    <citation type="submission" date="2009-01" db="EMBL/GenBank/DDBJ databases">
        <title>Complete sequence of chromosome of Arthrobacter chlorophenolicus A6.</title>
        <authorList>
            <consortium name="US DOE Joint Genome Institute"/>
            <person name="Lucas S."/>
            <person name="Copeland A."/>
            <person name="Lapidus A."/>
            <person name="Glavina del Rio T."/>
            <person name="Tice H."/>
            <person name="Bruce D."/>
            <person name="Goodwin L."/>
            <person name="Pitluck S."/>
            <person name="Goltsman E."/>
            <person name="Clum A."/>
            <person name="Larimer F."/>
            <person name="Land M."/>
            <person name="Hauser L."/>
            <person name="Kyrpides N."/>
            <person name="Mikhailova N."/>
            <person name="Jansson J."/>
            <person name="Richardson P."/>
        </authorList>
    </citation>
    <scope>NUCLEOTIDE SEQUENCE [LARGE SCALE GENOMIC DNA]</scope>
    <source>
        <strain>ATCC 700700 / DSM 12829 / CIP 107037 / JCM 12360 / KCTC 9906 / NCIMB 13794 / A6</strain>
    </source>
</reference>
<evidence type="ECO:0000255" key="1">
    <source>
        <dbReference type="HAMAP-Rule" id="MF_00176"/>
    </source>
</evidence>
<evidence type="ECO:0000256" key="2">
    <source>
        <dbReference type="SAM" id="MobiDB-lite"/>
    </source>
</evidence>
<sequence>MIDVKDLSENPDKFRASQRARGADESVVDAIISADSARRAALIRYENLRAEQNVFGKKVAQAKGEEKQALLAEVKELANSVKAASAEADAAQTKQEELLRTVPNLVEDGVPEGGEDDYVVVKTVGTPREFPDFEPKDHLEIGELIGAIDMERGAKVSGSRFYFLRGVGARLEMALLQMAMEQAIEAGFIPMITPTLVRPETMQGTGFDVKHDAEIYRLAEDDLYLVGTSEVALAGYHADEILDFSAGPIRYAGQSSCYRREAGSHGKDTRGIIRVHQFNKVEMFIYTTVEEAAAEHQRLLAWEEEMLAKCELPYRVIDTAAGDLGNSAARKYDCEAWVPTQGAYRELTSTSNCTTFQARRLNIRERAVNAEGVAKGTRAVATLNGTLATTRWIVALLEHHQNADGSVNVPKALQKYLGGLEVLPVL</sequence>
<keyword id="KW-0030">Aminoacyl-tRNA synthetase</keyword>
<keyword id="KW-0067">ATP-binding</keyword>
<keyword id="KW-0963">Cytoplasm</keyword>
<keyword id="KW-0436">Ligase</keyword>
<keyword id="KW-0547">Nucleotide-binding</keyword>
<keyword id="KW-0648">Protein biosynthesis</keyword>